<gene>
    <name evidence="1" type="primary">fusA</name>
    <name type="ordered locus">NAMH_0184</name>
</gene>
<evidence type="ECO:0000255" key="1">
    <source>
        <dbReference type="HAMAP-Rule" id="MF_00054"/>
    </source>
</evidence>
<sequence>MPRKTPLHMVRNIGIAAHIDAGKTTTTERILYYTGVSHKIGEVHEGAATMDWMEQEKERGITITSAATTCFWKDHQINIIDTPGHVDFTIEVERSMRVLDGAVAVFCAVGGVQPQSETVWRQANKYRVPRIAFVNKMDRIGADFYNVEKQIRERLKANAVPIQIPIGAEDNFKGVIDLVKMKALVWDDEAALGSKYEEQEIPEDLREKAEEYREKMIESVVETDEALMEKYFAGEELTEEEIKSAIKKATIAIEIVPMLCGTAFKNKGVQPLLDAVIDYLPAPDEVDWIKGIDPKTGEEISVNPSDDEPFAGLAFKIMTDPFVGKLTFTRFYSGTITSGSYVLNATKNKKERVGRLLRMHSNKREEVNEFYSGEIGAIVGLKNTLTGDTLCDEKRPIILERMEFPDPVISVAVEPKTKADQEKMAIALQKLAEEDPSFRVTTDEESGQTIISGMGELHLEIIVDRLKREFKVECNTGKPQVAYRETFKNQVEQEYKYAKQSGGRGQYGHVFIRLIPQEPGKGYEFVDLIKGGVIPREYIPAVDKGIQEAAQGGVLAGFPVVDFKVELFDGSYHDVDSSEMAFKLAGSMAFKEGVKKANPVILEPIMKVEIEVPEEYMGDVIGDINRRRGQVNSMEDVHGIKKINAFVPLSEMFGYSTDLRSMTQGRGTYSMVFDHYEEVPSNIADEIIKERQG</sequence>
<reference key="1">
    <citation type="journal article" date="2009" name="PLoS Genet.">
        <title>Adaptations to submarine hydrothermal environments exemplified by the genome of Nautilia profundicola.</title>
        <authorList>
            <person name="Campbell B.J."/>
            <person name="Smith J.L."/>
            <person name="Hanson T.E."/>
            <person name="Klotz M.G."/>
            <person name="Stein L.Y."/>
            <person name="Lee C.K."/>
            <person name="Wu D."/>
            <person name="Robinson J.M."/>
            <person name="Khouri H.M."/>
            <person name="Eisen J.A."/>
            <person name="Cary S.C."/>
        </authorList>
    </citation>
    <scope>NUCLEOTIDE SEQUENCE [LARGE SCALE GENOMIC DNA]</scope>
    <source>
        <strain>ATCC BAA-1463 / DSM 18972 / AmH</strain>
    </source>
</reference>
<feature type="chain" id="PRO_1000201478" description="Elongation factor G">
    <location>
        <begin position="1"/>
        <end position="693"/>
    </location>
</feature>
<feature type="domain" description="tr-type G">
    <location>
        <begin position="8"/>
        <end position="284"/>
    </location>
</feature>
<feature type="binding site" evidence="1">
    <location>
        <begin position="17"/>
        <end position="24"/>
    </location>
    <ligand>
        <name>GTP</name>
        <dbReference type="ChEBI" id="CHEBI:37565"/>
    </ligand>
</feature>
<feature type="binding site" evidence="1">
    <location>
        <begin position="81"/>
        <end position="85"/>
    </location>
    <ligand>
        <name>GTP</name>
        <dbReference type="ChEBI" id="CHEBI:37565"/>
    </ligand>
</feature>
<feature type="binding site" evidence="1">
    <location>
        <begin position="135"/>
        <end position="138"/>
    </location>
    <ligand>
        <name>GTP</name>
        <dbReference type="ChEBI" id="CHEBI:37565"/>
    </ligand>
</feature>
<proteinExistence type="inferred from homology"/>
<keyword id="KW-0963">Cytoplasm</keyword>
<keyword id="KW-0251">Elongation factor</keyword>
<keyword id="KW-0342">GTP-binding</keyword>
<keyword id="KW-0547">Nucleotide-binding</keyword>
<keyword id="KW-0648">Protein biosynthesis</keyword>
<accession>B9L7K0</accession>
<comment type="function">
    <text evidence="1">Catalyzes the GTP-dependent ribosomal translocation step during translation elongation. During this step, the ribosome changes from the pre-translocational (PRE) to the post-translocational (POST) state as the newly formed A-site-bound peptidyl-tRNA and P-site-bound deacylated tRNA move to the P and E sites, respectively. Catalyzes the coordinated movement of the two tRNA molecules, the mRNA and conformational changes in the ribosome.</text>
</comment>
<comment type="subcellular location">
    <subcellularLocation>
        <location evidence="1">Cytoplasm</location>
    </subcellularLocation>
</comment>
<comment type="similarity">
    <text evidence="1">Belongs to the TRAFAC class translation factor GTPase superfamily. Classic translation factor GTPase family. EF-G/EF-2 subfamily.</text>
</comment>
<protein>
    <recommendedName>
        <fullName evidence="1">Elongation factor G</fullName>
        <shortName evidence="1">EF-G</shortName>
    </recommendedName>
</protein>
<name>EFG_NAUPA</name>
<organism>
    <name type="scientific">Nautilia profundicola (strain ATCC BAA-1463 / DSM 18972 / AmH)</name>
    <dbReference type="NCBI Taxonomy" id="598659"/>
    <lineage>
        <taxon>Bacteria</taxon>
        <taxon>Pseudomonadati</taxon>
        <taxon>Campylobacterota</taxon>
        <taxon>Epsilonproteobacteria</taxon>
        <taxon>Nautiliales</taxon>
        <taxon>Nautiliaceae</taxon>
        <taxon>Nautilia</taxon>
    </lineage>
</organism>
<dbReference type="EMBL" id="CP001279">
    <property type="protein sequence ID" value="ACM92783.1"/>
    <property type="molecule type" value="Genomic_DNA"/>
</dbReference>
<dbReference type="RefSeq" id="WP_015901835.1">
    <property type="nucleotide sequence ID" value="NC_012115.1"/>
</dbReference>
<dbReference type="SMR" id="B9L7K0"/>
<dbReference type="STRING" id="598659.NAMH_0184"/>
<dbReference type="KEGG" id="nam:NAMH_0184"/>
<dbReference type="eggNOG" id="COG0480">
    <property type="taxonomic scope" value="Bacteria"/>
</dbReference>
<dbReference type="HOGENOM" id="CLU_002794_4_1_7"/>
<dbReference type="OrthoDB" id="9804431at2"/>
<dbReference type="Proteomes" id="UP000000448">
    <property type="component" value="Chromosome"/>
</dbReference>
<dbReference type="GO" id="GO:0005737">
    <property type="term" value="C:cytoplasm"/>
    <property type="evidence" value="ECO:0007669"/>
    <property type="project" value="UniProtKB-SubCell"/>
</dbReference>
<dbReference type="GO" id="GO:0005525">
    <property type="term" value="F:GTP binding"/>
    <property type="evidence" value="ECO:0007669"/>
    <property type="project" value="UniProtKB-UniRule"/>
</dbReference>
<dbReference type="GO" id="GO:0003924">
    <property type="term" value="F:GTPase activity"/>
    <property type="evidence" value="ECO:0007669"/>
    <property type="project" value="InterPro"/>
</dbReference>
<dbReference type="GO" id="GO:0003746">
    <property type="term" value="F:translation elongation factor activity"/>
    <property type="evidence" value="ECO:0007669"/>
    <property type="project" value="UniProtKB-UniRule"/>
</dbReference>
<dbReference type="GO" id="GO:0032790">
    <property type="term" value="P:ribosome disassembly"/>
    <property type="evidence" value="ECO:0007669"/>
    <property type="project" value="TreeGrafter"/>
</dbReference>
<dbReference type="CDD" id="cd01886">
    <property type="entry name" value="EF-G"/>
    <property type="match status" value="1"/>
</dbReference>
<dbReference type="CDD" id="cd16262">
    <property type="entry name" value="EFG_III"/>
    <property type="match status" value="1"/>
</dbReference>
<dbReference type="CDD" id="cd01434">
    <property type="entry name" value="EFG_mtEFG1_IV"/>
    <property type="match status" value="1"/>
</dbReference>
<dbReference type="CDD" id="cd03713">
    <property type="entry name" value="EFG_mtEFG_C"/>
    <property type="match status" value="1"/>
</dbReference>
<dbReference type="CDD" id="cd04088">
    <property type="entry name" value="EFG_mtEFG_II"/>
    <property type="match status" value="1"/>
</dbReference>
<dbReference type="FunFam" id="2.40.30.10:FF:000006">
    <property type="entry name" value="Elongation factor G"/>
    <property type="match status" value="1"/>
</dbReference>
<dbReference type="FunFam" id="3.30.230.10:FF:000003">
    <property type="entry name" value="Elongation factor G"/>
    <property type="match status" value="1"/>
</dbReference>
<dbReference type="FunFam" id="3.30.70.240:FF:000001">
    <property type="entry name" value="Elongation factor G"/>
    <property type="match status" value="1"/>
</dbReference>
<dbReference type="FunFam" id="3.30.70.870:FF:000001">
    <property type="entry name" value="Elongation factor G"/>
    <property type="match status" value="1"/>
</dbReference>
<dbReference type="FunFam" id="3.40.50.300:FF:000029">
    <property type="entry name" value="Elongation factor G"/>
    <property type="match status" value="1"/>
</dbReference>
<dbReference type="Gene3D" id="3.30.230.10">
    <property type="match status" value="1"/>
</dbReference>
<dbReference type="Gene3D" id="3.30.70.240">
    <property type="match status" value="1"/>
</dbReference>
<dbReference type="Gene3D" id="3.30.70.870">
    <property type="entry name" value="Elongation Factor G (Translational Gtpase), domain 3"/>
    <property type="match status" value="1"/>
</dbReference>
<dbReference type="Gene3D" id="3.40.50.300">
    <property type="entry name" value="P-loop containing nucleotide triphosphate hydrolases"/>
    <property type="match status" value="1"/>
</dbReference>
<dbReference type="Gene3D" id="2.40.30.10">
    <property type="entry name" value="Translation factors"/>
    <property type="match status" value="1"/>
</dbReference>
<dbReference type="HAMAP" id="MF_00054_B">
    <property type="entry name" value="EF_G_EF_2_B"/>
    <property type="match status" value="1"/>
</dbReference>
<dbReference type="InterPro" id="IPR053905">
    <property type="entry name" value="EF-G-like_DII"/>
</dbReference>
<dbReference type="InterPro" id="IPR041095">
    <property type="entry name" value="EFG_II"/>
</dbReference>
<dbReference type="InterPro" id="IPR009022">
    <property type="entry name" value="EFG_III"/>
</dbReference>
<dbReference type="InterPro" id="IPR035647">
    <property type="entry name" value="EFG_III/V"/>
</dbReference>
<dbReference type="InterPro" id="IPR047872">
    <property type="entry name" value="EFG_IV"/>
</dbReference>
<dbReference type="InterPro" id="IPR035649">
    <property type="entry name" value="EFG_V"/>
</dbReference>
<dbReference type="InterPro" id="IPR000640">
    <property type="entry name" value="EFG_V-like"/>
</dbReference>
<dbReference type="InterPro" id="IPR031157">
    <property type="entry name" value="G_TR_CS"/>
</dbReference>
<dbReference type="InterPro" id="IPR027417">
    <property type="entry name" value="P-loop_NTPase"/>
</dbReference>
<dbReference type="InterPro" id="IPR020568">
    <property type="entry name" value="Ribosomal_Su5_D2-typ_SF"/>
</dbReference>
<dbReference type="InterPro" id="IPR014721">
    <property type="entry name" value="Ribsml_uS5_D2-typ_fold_subgr"/>
</dbReference>
<dbReference type="InterPro" id="IPR005225">
    <property type="entry name" value="Small_GTP-bd"/>
</dbReference>
<dbReference type="InterPro" id="IPR000795">
    <property type="entry name" value="T_Tr_GTP-bd_dom"/>
</dbReference>
<dbReference type="InterPro" id="IPR009000">
    <property type="entry name" value="Transl_B-barrel_sf"/>
</dbReference>
<dbReference type="InterPro" id="IPR004540">
    <property type="entry name" value="Transl_elong_EFG/EF2"/>
</dbReference>
<dbReference type="InterPro" id="IPR005517">
    <property type="entry name" value="Transl_elong_EFG/EF2_IV"/>
</dbReference>
<dbReference type="NCBIfam" id="TIGR00484">
    <property type="entry name" value="EF-G"/>
    <property type="match status" value="1"/>
</dbReference>
<dbReference type="NCBIfam" id="NF009379">
    <property type="entry name" value="PRK12740.1-3"/>
    <property type="match status" value="1"/>
</dbReference>
<dbReference type="NCBIfam" id="NF009381">
    <property type="entry name" value="PRK12740.1-5"/>
    <property type="match status" value="1"/>
</dbReference>
<dbReference type="NCBIfam" id="NF009891">
    <property type="entry name" value="PRK13351.1-1"/>
    <property type="match status" value="1"/>
</dbReference>
<dbReference type="NCBIfam" id="TIGR00231">
    <property type="entry name" value="small_GTP"/>
    <property type="match status" value="1"/>
</dbReference>
<dbReference type="PANTHER" id="PTHR43261:SF1">
    <property type="entry name" value="RIBOSOME-RELEASING FACTOR 2, MITOCHONDRIAL"/>
    <property type="match status" value="1"/>
</dbReference>
<dbReference type="PANTHER" id="PTHR43261">
    <property type="entry name" value="TRANSLATION ELONGATION FACTOR G-RELATED"/>
    <property type="match status" value="1"/>
</dbReference>
<dbReference type="Pfam" id="PF22042">
    <property type="entry name" value="EF-G_D2"/>
    <property type="match status" value="1"/>
</dbReference>
<dbReference type="Pfam" id="PF00679">
    <property type="entry name" value="EFG_C"/>
    <property type="match status" value="1"/>
</dbReference>
<dbReference type="Pfam" id="PF14492">
    <property type="entry name" value="EFG_III"/>
    <property type="match status" value="1"/>
</dbReference>
<dbReference type="Pfam" id="PF03764">
    <property type="entry name" value="EFG_IV"/>
    <property type="match status" value="1"/>
</dbReference>
<dbReference type="Pfam" id="PF00009">
    <property type="entry name" value="GTP_EFTU"/>
    <property type="match status" value="1"/>
</dbReference>
<dbReference type="PRINTS" id="PR00315">
    <property type="entry name" value="ELONGATNFCT"/>
</dbReference>
<dbReference type="SMART" id="SM00838">
    <property type="entry name" value="EFG_C"/>
    <property type="match status" value="1"/>
</dbReference>
<dbReference type="SMART" id="SM00889">
    <property type="entry name" value="EFG_IV"/>
    <property type="match status" value="1"/>
</dbReference>
<dbReference type="SUPFAM" id="SSF54980">
    <property type="entry name" value="EF-G C-terminal domain-like"/>
    <property type="match status" value="2"/>
</dbReference>
<dbReference type="SUPFAM" id="SSF52540">
    <property type="entry name" value="P-loop containing nucleoside triphosphate hydrolases"/>
    <property type="match status" value="1"/>
</dbReference>
<dbReference type="SUPFAM" id="SSF54211">
    <property type="entry name" value="Ribosomal protein S5 domain 2-like"/>
    <property type="match status" value="1"/>
</dbReference>
<dbReference type="SUPFAM" id="SSF50447">
    <property type="entry name" value="Translation proteins"/>
    <property type="match status" value="1"/>
</dbReference>
<dbReference type="PROSITE" id="PS00301">
    <property type="entry name" value="G_TR_1"/>
    <property type="match status" value="1"/>
</dbReference>
<dbReference type="PROSITE" id="PS51722">
    <property type="entry name" value="G_TR_2"/>
    <property type="match status" value="1"/>
</dbReference>